<gene>
    <name type="primary">yyaJ</name>
    <name type="ordered locus">BSU40840</name>
</gene>
<comment type="subcellular location">
    <subcellularLocation>
        <location evidence="2">Cell membrane</location>
        <topology evidence="2">Multi-pass membrane protein</topology>
    </subcellularLocation>
</comment>
<comment type="similarity">
    <text evidence="2">Belongs to the major facilitator superfamily. Sugar transporter (TC 2.A.1.1) family.</text>
</comment>
<feature type="chain" id="PRO_0000050493" description="Putative metabolite transport protein YyaJ">
    <location>
        <begin position="1"/>
        <end position="451"/>
    </location>
</feature>
<feature type="topological domain" description="Cytoplasmic" evidence="1">
    <location>
        <begin position="1"/>
        <end position="29"/>
    </location>
</feature>
<feature type="transmembrane region" description="Helical; Name=1" evidence="1">
    <location>
        <begin position="30"/>
        <end position="50"/>
    </location>
</feature>
<feature type="topological domain" description="Extracellular" evidence="1">
    <location>
        <begin position="51"/>
        <end position="60"/>
    </location>
</feature>
<feature type="transmembrane region" description="Helical; Name=2" evidence="1">
    <location>
        <begin position="61"/>
        <end position="81"/>
    </location>
</feature>
<feature type="topological domain" description="Cytoplasmic" evidence="1">
    <location>
        <begin position="82"/>
        <end position="97"/>
    </location>
</feature>
<feature type="transmembrane region" description="Helical; Name=3" evidence="1">
    <location>
        <begin position="98"/>
        <end position="118"/>
    </location>
</feature>
<feature type="topological domain" description="Extracellular" evidence="1">
    <location>
        <begin position="119"/>
        <end position="124"/>
    </location>
</feature>
<feature type="transmembrane region" description="Helical; Name=4" evidence="1">
    <location>
        <begin position="125"/>
        <end position="145"/>
    </location>
</feature>
<feature type="topological domain" description="Cytoplasmic" evidence="1">
    <location>
        <begin position="146"/>
        <end position="157"/>
    </location>
</feature>
<feature type="transmembrane region" description="Helical; Name=5" evidence="1">
    <location>
        <begin position="158"/>
        <end position="178"/>
    </location>
</feature>
<feature type="topological domain" description="Extracellular" evidence="1">
    <location>
        <begin position="179"/>
        <end position="182"/>
    </location>
</feature>
<feature type="transmembrane region" description="Helical; Name=6" evidence="1">
    <location>
        <begin position="183"/>
        <end position="203"/>
    </location>
</feature>
<feature type="topological domain" description="Cytoplasmic" evidence="1">
    <location>
        <begin position="204"/>
        <end position="270"/>
    </location>
</feature>
<feature type="transmembrane region" description="Helical; Name=7" evidence="1">
    <location>
        <begin position="271"/>
        <end position="291"/>
    </location>
</feature>
<feature type="topological domain" description="Extracellular" evidence="1">
    <location>
        <begin position="292"/>
        <end position="305"/>
    </location>
</feature>
<feature type="transmembrane region" description="Helical; Name=8" evidence="1">
    <location>
        <begin position="306"/>
        <end position="326"/>
    </location>
</feature>
<feature type="topological domain" description="Cytoplasmic" evidence="1">
    <location>
        <begin position="327"/>
        <end position="333"/>
    </location>
</feature>
<feature type="transmembrane region" description="Helical; Name=9" evidence="1">
    <location>
        <begin position="334"/>
        <end position="354"/>
    </location>
</feature>
<feature type="topological domain" description="Extracellular" evidence="1">
    <location>
        <begin position="355"/>
        <end position="357"/>
    </location>
</feature>
<feature type="transmembrane region" description="Helical; Name=10" evidence="1">
    <location>
        <begin position="358"/>
        <end position="378"/>
    </location>
</feature>
<feature type="topological domain" description="Cytoplasmic" evidence="1">
    <location>
        <begin position="379"/>
        <end position="396"/>
    </location>
</feature>
<feature type="transmembrane region" description="Helical; Name=11" evidence="1">
    <location>
        <begin position="397"/>
        <end position="417"/>
    </location>
</feature>
<feature type="topological domain" description="Extracellular" evidence="1">
    <location>
        <begin position="418"/>
        <end position="421"/>
    </location>
</feature>
<feature type="transmembrane region" description="Helical; Name=12" evidence="1">
    <location>
        <begin position="422"/>
        <end position="442"/>
    </location>
</feature>
<feature type="topological domain" description="Cytoplasmic" evidence="1">
    <location>
        <begin position="443"/>
        <end position="451"/>
    </location>
</feature>
<feature type="sequence conflict" description="In Ref. 2; AAA64342." evidence="2" ref="2">
    <original>N</original>
    <variation>K</variation>
    <location>
        <position position="2"/>
    </location>
</feature>
<feature type="sequence conflict" description="In Ref. 2; AAA64342." evidence="2" ref="2">
    <original>D</original>
    <variation>G</variation>
    <location>
        <position position="21"/>
    </location>
</feature>
<feature type="sequence conflict" description="In Ref. 2; AAA64342." evidence="2" ref="2">
    <original>H</original>
    <variation>N</variation>
    <location>
        <position position="60"/>
    </location>
</feature>
<feature type="sequence conflict" description="In Ref. 2; AAA64342." evidence="2" ref="2">
    <original>A</original>
    <variation>S</variation>
    <location>
        <position position="83"/>
    </location>
</feature>
<feature type="sequence conflict" description="In Ref. 2; AAA64342." evidence="2" ref="2">
    <original>A</original>
    <variation>P</variation>
    <location>
        <position position="98"/>
    </location>
</feature>
<feature type="sequence conflict" description="In Ref. 1; BAA05214." evidence="2" ref="1">
    <original>N</original>
    <variation>D</variation>
    <location>
        <position position="141"/>
    </location>
</feature>
<organism>
    <name type="scientific">Bacillus subtilis (strain 168)</name>
    <dbReference type="NCBI Taxonomy" id="224308"/>
    <lineage>
        <taxon>Bacteria</taxon>
        <taxon>Bacillati</taxon>
        <taxon>Bacillota</taxon>
        <taxon>Bacilli</taxon>
        <taxon>Bacillales</taxon>
        <taxon>Bacillaceae</taxon>
        <taxon>Bacillus</taxon>
    </lineage>
</organism>
<proteinExistence type="inferred from homology"/>
<reference key="1">
    <citation type="journal article" date="1994" name="DNA Res.">
        <title>Systematic sequencing of the 180 kilobase region of the Bacillus subtilis chromosome containing the replication origin.</title>
        <authorList>
            <person name="Ogasawara N."/>
            <person name="Nakai S."/>
            <person name="Yoshikawa H."/>
        </authorList>
    </citation>
    <scope>NUCLEOTIDE SEQUENCE [GENOMIC DNA]</scope>
    <source>
        <strain>168</strain>
    </source>
</reference>
<reference key="2">
    <citation type="journal article" date="1994" name="Biochim. Biophys. Acta">
        <title>Isolation of Tn917 insertional mutants of Bacillus subtilis that are resistant to the protonophore carbonyl cyanide m-chlorophenylhydrazone.</title>
        <authorList>
            <person name="Quirk P.G."/>
            <person name="Guffanti A.A."/>
            <person name="Clejan S."/>
            <person name="Cheng J."/>
            <person name="Krulwich T.A."/>
        </authorList>
    </citation>
    <scope>NUCLEOTIDE SEQUENCE [GENOMIC DNA]</scope>
    <source>
        <strain>BD99</strain>
    </source>
</reference>
<reference key="3">
    <citation type="journal article" date="1997" name="Nature">
        <title>The complete genome sequence of the Gram-positive bacterium Bacillus subtilis.</title>
        <authorList>
            <person name="Kunst F."/>
            <person name="Ogasawara N."/>
            <person name="Moszer I."/>
            <person name="Albertini A.M."/>
            <person name="Alloni G."/>
            <person name="Azevedo V."/>
            <person name="Bertero M.G."/>
            <person name="Bessieres P."/>
            <person name="Bolotin A."/>
            <person name="Borchert S."/>
            <person name="Borriss R."/>
            <person name="Boursier L."/>
            <person name="Brans A."/>
            <person name="Braun M."/>
            <person name="Brignell S.C."/>
            <person name="Bron S."/>
            <person name="Brouillet S."/>
            <person name="Bruschi C.V."/>
            <person name="Caldwell B."/>
            <person name="Capuano V."/>
            <person name="Carter N.M."/>
            <person name="Choi S.-K."/>
            <person name="Codani J.-J."/>
            <person name="Connerton I.F."/>
            <person name="Cummings N.J."/>
            <person name="Daniel R.A."/>
            <person name="Denizot F."/>
            <person name="Devine K.M."/>
            <person name="Duesterhoeft A."/>
            <person name="Ehrlich S.D."/>
            <person name="Emmerson P.T."/>
            <person name="Entian K.-D."/>
            <person name="Errington J."/>
            <person name="Fabret C."/>
            <person name="Ferrari E."/>
            <person name="Foulger D."/>
            <person name="Fritz C."/>
            <person name="Fujita M."/>
            <person name="Fujita Y."/>
            <person name="Fuma S."/>
            <person name="Galizzi A."/>
            <person name="Galleron N."/>
            <person name="Ghim S.-Y."/>
            <person name="Glaser P."/>
            <person name="Goffeau A."/>
            <person name="Golightly E.J."/>
            <person name="Grandi G."/>
            <person name="Guiseppi G."/>
            <person name="Guy B.J."/>
            <person name="Haga K."/>
            <person name="Haiech J."/>
            <person name="Harwood C.R."/>
            <person name="Henaut A."/>
            <person name="Hilbert H."/>
            <person name="Holsappel S."/>
            <person name="Hosono S."/>
            <person name="Hullo M.-F."/>
            <person name="Itaya M."/>
            <person name="Jones L.-M."/>
            <person name="Joris B."/>
            <person name="Karamata D."/>
            <person name="Kasahara Y."/>
            <person name="Klaerr-Blanchard M."/>
            <person name="Klein C."/>
            <person name="Kobayashi Y."/>
            <person name="Koetter P."/>
            <person name="Koningstein G."/>
            <person name="Krogh S."/>
            <person name="Kumano M."/>
            <person name="Kurita K."/>
            <person name="Lapidus A."/>
            <person name="Lardinois S."/>
            <person name="Lauber J."/>
            <person name="Lazarevic V."/>
            <person name="Lee S.-M."/>
            <person name="Levine A."/>
            <person name="Liu H."/>
            <person name="Masuda S."/>
            <person name="Mauel C."/>
            <person name="Medigue C."/>
            <person name="Medina N."/>
            <person name="Mellado R.P."/>
            <person name="Mizuno M."/>
            <person name="Moestl D."/>
            <person name="Nakai S."/>
            <person name="Noback M."/>
            <person name="Noone D."/>
            <person name="O'Reilly M."/>
            <person name="Ogawa K."/>
            <person name="Ogiwara A."/>
            <person name="Oudega B."/>
            <person name="Park S.-H."/>
            <person name="Parro V."/>
            <person name="Pohl T.M."/>
            <person name="Portetelle D."/>
            <person name="Porwollik S."/>
            <person name="Prescott A.M."/>
            <person name="Presecan E."/>
            <person name="Pujic P."/>
            <person name="Purnelle B."/>
            <person name="Rapoport G."/>
            <person name="Rey M."/>
            <person name="Reynolds S."/>
            <person name="Rieger M."/>
            <person name="Rivolta C."/>
            <person name="Rocha E."/>
            <person name="Roche B."/>
            <person name="Rose M."/>
            <person name="Sadaie Y."/>
            <person name="Sato T."/>
            <person name="Scanlan E."/>
            <person name="Schleich S."/>
            <person name="Schroeter R."/>
            <person name="Scoffone F."/>
            <person name="Sekiguchi J."/>
            <person name="Sekowska A."/>
            <person name="Seror S.J."/>
            <person name="Serror P."/>
            <person name="Shin B.-S."/>
            <person name="Soldo B."/>
            <person name="Sorokin A."/>
            <person name="Tacconi E."/>
            <person name="Takagi T."/>
            <person name="Takahashi H."/>
            <person name="Takemaru K."/>
            <person name="Takeuchi M."/>
            <person name="Tamakoshi A."/>
            <person name="Tanaka T."/>
            <person name="Terpstra P."/>
            <person name="Tognoni A."/>
            <person name="Tosato V."/>
            <person name="Uchiyama S."/>
            <person name="Vandenbol M."/>
            <person name="Vannier F."/>
            <person name="Vassarotti A."/>
            <person name="Viari A."/>
            <person name="Wambutt R."/>
            <person name="Wedler E."/>
            <person name="Wedler H."/>
            <person name="Weitzenegger T."/>
            <person name="Winters P."/>
            <person name="Wipat A."/>
            <person name="Yamamoto H."/>
            <person name="Yamane K."/>
            <person name="Yasumoto K."/>
            <person name="Yata K."/>
            <person name="Yoshida K."/>
            <person name="Yoshikawa H.-F."/>
            <person name="Zumstein E."/>
            <person name="Yoshikawa H."/>
            <person name="Danchin A."/>
        </authorList>
    </citation>
    <scope>NUCLEOTIDE SEQUENCE [LARGE SCALE GENOMIC DNA]</scope>
    <source>
        <strain>168</strain>
    </source>
</reference>
<reference key="4">
    <citation type="journal article" date="2009" name="Microbiology">
        <title>From a consortium sequence to a unified sequence: the Bacillus subtilis 168 reference genome a decade later.</title>
        <authorList>
            <person name="Barbe V."/>
            <person name="Cruveiller S."/>
            <person name="Kunst F."/>
            <person name="Lenoble P."/>
            <person name="Meurice G."/>
            <person name="Sekowska A."/>
            <person name="Vallenet D."/>
            <person name="Wang T."/>
            <person name="Moszer I."/>
            <person name="Medigue C."/>
            <person name="Danchin A."/>
        </authorList>
    </citation>
    <scope>SEQUENCE REVISION TO 141</scope>
</reference>
<accession>P37514</accession>
<accession>Q45644</accession>
<name>YYAJ_BACSU</name>
<keyword id="KW-1003">Cell membrane</keyword>
<keyword id="KW-0472">Membrane</keyword>
<keyword id="KW-1185">Reference proteome</keyword>
<keyword id="KW-0812">Transmembrane</keyword>
<keyword id="KW-1133">Transmembrane helix</keyword>
<keyword id="KW-0813">Transport</keyword>
<sequence>MNTIFKQKNTHPFSNAANRLDRLPISRVHFQVLTALGIVYFFDLADLFTLSNVAPALIEHWGIPLSTIANVTAASFLGMFLGASLGGRLSDRIGRKKALNLFVFVFSIASLCNAAAWDIPSLMTFRFLTGFGVAAAMVITNSYLAEFFPSSVRGKYISFCAMIGLIGVPITNIVSAFVIPLGSWGWRLVFVWGAVGLIYFFFIHRLEESPRWHENRGEYAKADAILTRIEEQVEKEKGPLPAASQPKVSETVKQNAGYAGLLKGRNLKITIVLSAVWIFETFGFYGFASWVPSLLKSNGVTMENTLWYNVLHSVGAPLGALLGSMISERFQRKWILAASAFLTAIAGLLYGMTFIPIMIIVFGFIVNITERVFTSNLYAYTSEPYPTEYRSSGSGLAYGLGRFSNIFGSLLVGFIAVQLGYISVFLFIGGCWLACSLLLIFFGPNTNAKQI</sequence>
<protein>
    <recommendedName>
        <fullName>Putative metabolite transport protein YyaJ</fullName>
    </recommendedName>
</protein>
<evidence type="ECO:0000255" key="1"/>
<evidence type="ECO:0000305" key="2"/>
<dbReference type="EMBL" id="D26185">
    <property type="protein sequence ID" value="BAA05214.1"/>
    <property type="molecule type" value="Genomic_DNA"/>
</dbReference>
<dbReference type="EMBL" id="L16865">
    <property type="protein sequence ID" value="AAA64342.1"/>
    <property type="molecule type" value="Genomic_DNA"/>
</dbReference>
<dbReference type="EMBL" id="AL009126">
    <property type="protein sequence ID" value="CAB16121.2"/>
    <property type="molecule type" value="Genomic_DNA"/>
</dbReference>
<dbReference type="PIR" id="S66008">
    <property type="entry name" value="S66008"/>
</dbReference>
<dbReference type="RefSeq" id="NP_391964.2">
    <property type="nucleotide sequence ID" value="NC_000964.3"/>
</dbReference>
<dbReference type="RefSeq" id="WP_003243011.1">
    <property type="nucleotide sequence ID" value="NZ_OZ025638.1"/>
</dbReference>
<dbReference type="SMR" id="P37514"/>
<dbReference type="FunCoup" id="P37514">
    <property type="interactions" value="218"/>
</dbReference>
<dbReference type="IntAct" id="P37514">
    <property type="interactions" value="9"/>
</dbReference>
<dbReference type="STRING" id="224308.BSU40840"/>
<dbReference type="TCDB" id="2.A.1.1.113">
    <property type="family name" value="the major facilitator superfamily (mfs)"/>
</dbReference>
<dbReference type="PaxDb" id="224308-BSU40840"/>
<dbReference type="EnsemblBacteria" id="CAB16121">
    <property type="protein sequence ID" value="CAB16121"/>
    <property type="gene ID" value="BSU_40840"/>
</dbReference>
<dbReference type="GeneID" id="937884"/>
<dbReference type="KEGG" id="bsu:BSU40840"/>
<dbReference type="PATRIC" id="fig|224308.179.peg.4425"/>
<dbReference type="eggNOG" id="COG0477">
    <property type="taxonomic scope" value="Bacteria"/>
</dbReference>
<dbReference type="eggNOG" id="COG2814">
    <property type="taxonomic scope" value="Bacteria"/>
</dbReference>
<dbReference type="InParanoid" id="P37514"/>
<dbReference type="OrthoDB" id="9787026at2"/>
<dbReference type="PhylomeDB" id="P37514"/>
<dbReference type="BioCyc" id="BSUB:BSU40840-MONOMER"/>
<dbReference type="Proteomes" id="UP000001570">
    <property type="component" value="Chromosome"/>
</dbReference>
<dbReference type="GO" id="GO:0005886">
    <property type="term" value="C:plasma membrane"/>
    <property type="evidence" value="ECO:0007669"/>
    <property type="project" value="UniProtKB-SubCell"/>
</dbReference>
<dbReference type="GO" id="GO:0022857">
    <property type="term" value="F:transmembrane transporter activity"/>
    <property type="evidence" value="ECO:0007669"/>
    <property type="project" value="InterPro"/>
</dbReference>
<dbReference type="CDD" id="cd17316">
    <property type="entry name" value="MFS_SV2_like"/>
    <property type="match status" value="1"/>
</dbReference>
<dbReference type="Gene3D" id="1.20.1250.20">
    <property type="entry name" value="MFS general substrate transporter like domains"/>
    <property type="match status" value="1"/>
</dbReference>
<dbReference type="InterPro" id="IPR020846">
    <property type="entry name" value="MFS_dom"/>
</dbReference>
<dbReference type="InterPro" id="IPR005828">
    <property type="entry name" value="MFS_sugar_transport-like"/>
</dbReference>
<dbReference type="InterPro" id="IPR036259">
    <property type="entry name" value="MFS_trans_sf"/>
</dbReference>
<dbReference type="PANTHER" id="PTHR23508">
    <property type="entry name" value="CARBOXYLIC ACID TRANSPORTER PROTEIN HOMOLOG"/>
    <property type="match status" value="1"/>
</dbReference>
<dbReference type="PANTHER" id="PTHR23508:SF10">
    <property type="entry name" value="CARBOXYLIC ACID TRANSPORTER PROTEIN HOMOLOG"/>
    <property type="match status" value="1"/>
</dbReference>
<dbReference type="Pfam" id="PF00083">
    <property type="entry name" value="Sugar_tr"/>
    <property type="match status" value="1"/>
</dbReference>
<dbReference type="SUPFAM" id="SSF103473">
    <property type="entry name" value="MFS general substrate transporter"/>
    <property type="match status" value="1"/>
</dbReference>
<dbReference type="PROSITE" id="PS50850">
    <property type="entry name" value="MFS"/>
    <property type="match status" value="1"/>
</dbReference>